<gene>
    <name type="primary">CDPF1</name>
</gene>
<protein>
    <recommendedName>
        <fullName>Cysteine-rich DPF motif domain-containing protein 1</fullName>
    </recommendedName>
</protein>
<proteinExistence type="evidence at transcript level"/>
<keyword id="KW-1185">Reference proteome</keyword>
<evidence type="ECO:0000305" key="1"/>
<name>CDPF1_BOVIN</name>
<comment type="similarity">
    <text evidence="1">Belongs to the CDPF1 family.</text>
</comment>
<dbReference type="EMBL" id="BC120167">
    <property type="protein sequence ID" value="AAI20168.1"/>
    <property type="molecule type" value="mRNA"/>
</dbReference>
<dbReference type="RefSeq" id="NP_001069561.1">
    <property type="nucleotide sequence ID" value="NM_001076093.2"/>
</dbReference>
<dbReference type="RefSeq" id="XP_005207543.1">
    <property type="nucleotide sequence ID" value="XM_005207486.2"/>
</dbReference>
<dbReference type="RefSeq" id="XP_010804103.1">
    <property type="nucleotide sequence ID" value="XM_010805801.2"/>
</dbReference>
<dbReference type="RefSeq" id="XP_059742554.1">
    <property type="nucleotide sequence ID" value="XM_059886571.1"/>
</dbReference>
<dbReference type="FunCoup" id="Q0VCH3">
    <property type="interactions" value="457"/>
</dbReference>
<dbReference type="STRING" id="9913.ENSBTAP00000010609"/>
<dbReference type="PaxDb" id="9913-ENSBTAP00000010609"/>
<dbReference type="GeneID" id="537366"/>
<dbReference type="KEGG" id="bta:537366"/>
<dbReference type="CTD" id="150383"/>
<dbReference type="VEuPathDB" id="HostDB:ENSBTAG00000008065"/>
<dbReference type="eggNOG" id="KOG4543">
    <property type="taxonomic scope" value="Eukaryota"/>
</dbReference>
<dbReference type="HOGENOM" id="CLU_138011_0_0_1"/>
<dbReference type="InParanoid" id="Q0VCH3"/>
<dbReference type="OMA" id="CDMHELV"/>
<dbReference type="OrthoDB" id="191995at2759"/>
<dbReference type="TreeFam" id="TF313933"/>
<dbReference type="Proteomes" id="UP000009136">
    <property type="component" value="Chromosome 5"/>
</dbReference>
<dbReference type="Bgee" id="ENSBTAG00000008065">
    <property type="expression patterns" value="Expressed in retina and 105 other cell types or tissues"/>
</dbReference>
<dbReference type="InterPro" id="IPR042426">
    <property type="entry name" value="CDPF1"/>
</dbReference>
<dbReference type="InterPro" id="IPR018785">
    <property type="entry name" value="CDPF1_dom"/>
</dbReference>
<dbReference type="PANTHER" id="PTHR31849:SF1">
    <property type="entry name" value="CYSTEINE-RICH DPF MOTIF DOMAIN-CONTAINING PROTEIN 1"/>
    <property type="match status" value="1"/>
</dbReference>
<dbReference type="PANTHER" id="PTHR31849">
    <property type="entry name" value="CYSTEINE-RICH PDF MOTIF DOMAIN-CONTAINING PROTEIN 1"/>
    <property type="match status" value="1"/>
</dbReference>
<dbReference type="Pfam" id="PF10170">
    <property type="entry name" value="C6_DPF"/>
    <property type="match status" value="1"/>
</dbReference>
<dbReference type="PRINTS" id="PR01995">
    <property type="entry name" value="UPF0595"/>
</dbReference>
<feature type="chain" id="PRO_0000341359" description="Cysteine-rich DPF motif domain-containing protein 1">
    <location>
        <begin position="1"/>
        <end position="121"/>
    </location>
</feature>
<sequence>MACETERTPLGVFKCQLCALTAPYSYQGRQPPDSQSVVLLEESYVMRDPFTPDKGRFLVVGSRCSMCGRLVCVGPECSLFYSKRFCLPCVQDNVDAFPQEIQQDLEKRKVPFTRPASQRSS</sequence>
<reference key="1">
    <citation type="submission" date="2006-08" db="EMBL/GenBank/DDBJ databases">
        <authorList>
            <consortium name="NIH - Mammalian Gene Collection (MGC) project"/>
        </authorList>
    </citation>
    <scope>NUCLEOTIDE SEQUENCE [LARGE SCALE MRNA]</scope>
    <source>
        <strain>Hereford</strain>
        <tissue>Fetal pons</tissue>
    </source>
</reference>
<organism>
    <name type="scientific">Bos taurus</name>
    <name type="common">Bovine</name>
    <dbReference type="NCBI Taxonomy" id="9913"/>
    <lineage>
        <taxon>Eukaryota</taxon>
        <taxon>Metazoa</taxon>
        <taxon>Chordata</taxon>
        <taxon>Craniata</taxon>
        <taxon>Vertebrata</taxon>
        <taxon>Euteleostomi</taxon>
        <taxon>Mammalia</taxon>
        <taxon>Eutheria</taxon>
        <taxon>Laurasiatheria</taxon>
        <taxon>Artiodactyla</taxon>
        <taxon>Ruminantia</taxon>
        <taxon>Pecora</taxon>
        <taxon>Bovidae</taxon>
        <taxon>Bovinae</taxon>
        <taxon>Bos</taxon>
    </lineage>
</organism>
<accession>Q0VCH3</accession>